<feature type="chain" id="PRO_0000331455" description="Filaggrin-2">
    <location>
        <begin position="1"/>
        <end position="2362"/>
    </location>
</feature>
<feature type="domain" description="EF-hand 1" evidence="3">
    <location>
        <begin position="8"/>
        <end position="43"/>
    </location>
</feature>
<feature type="domain" description="EF-hand 2" evidence="3">
    <location>
        <begin position="49"/>
        <end position="84"/>
    </location>
</feature>
<feature type="repeat" description="Filaggrin 1">
    <location>
        <begin position="261"/>
        <end position="308"/>
    </location>
</feature>
<feature type="repeat" description="Filaggrin 2">
    <location>
        <begin position="373"/>
        <end position="414"/>
    </location>
</feature>
<feature type="repeat" description="Filaggrin 3">
    <location>
        <begin position="555"/>
        <end position="607"/>
    </location>
</feature>
<feature type="repeat" description="Filaggrin 4">
    <location>
        <begin position="672"/>
        <end position="723"/>
    </location>
</feature>
<feature type="repeat" description="Filaggrin 5">
    <location>
        <begin position="880"/>
        <end position="927"/>
    </location>
</feature>
<feature type="repeat" description="Filaggrin 6">
    <location>
        <begin position="984"/>
        <end position="1035"/>
    </location>
</feature>
<feature type="repeat" description="Filaggrin 7">
    <location>
        <begin position="1165"/>
        <end position="1210"/>
    </location>
</feature>
<feature type="repeat" description="Filaggrin 8">
    <location>
        <begin position="1280"/>
        <end position="1334"/>
    </location>
</feature>
<feature type="repeat" description="Filaggrin 9">
    <location>
        <begin position="1474"/>
        <end position="1522"/>
    </location>
</feature>
<feature type="repeat" description="Filaggrin 10">
    <location>
        <begin position="1723"/>
        <end position="1756"/>
    </location>
</feature>
<feature type="repeat" description="Filaggrin 11">
    <location>
        <begin position="2016"/>
        <end position="2070"/>
    </location>
</feature>
<feature type="repeat" description="Filaggrin 12">
    <location>
        <begin position="2218"/>
        <end position="2259"/>
    </location>
</feature>
<feature type="region of interest" description="S-100-like" evidence="1">
    <location>
        <begin position="1"/>
        <end position="81"/>
    </location>
</feature>
<feature type="region of interest" description="Disordered" evidence="4">
    <location>
        <begin position="96"/>
        <end position="238"/>
    </location>
</feature>
<feature type="region of interest" description="Disordered" evidence="4">
    <location>
        <begin position="284"/>
        <end position="2109"/>
    </location>
</feature>
<feature type="compositionally biased region" description="Acidic residues" evidence="4">
    <location>
        <begin position="111"/>
        <end position="120"/>
    </location>
</feature>
<feature type="compositionally biased region" description="Basic and acidic residues" evidence="4">
    <location>
        <begin position="159"/>
        <end position="174"/>
    </location>
</feature>
<feature type="compositionally biased region" description="Basic and acidic residues" evidence="4">
    <location>
        <begin position="189"/>
        <end position="214"/>
    </location>
</feature>
<feature type="compositionally biased region" description="Polar residues" evidence="4">
    <location>
        <begin position="284"/>
        <end position="317"/>
    </location>
</feature>
<feature type="compositionally biased region" description="Polar residues" evidence="4">
    <location>
        <begin position="342"/>
        <end position="375"/>
    </location>
</feature>
<feature type="compositionally biased region" description="Polar residues" evidence="4">
    <location>
        <begin position="383"/>
        <end position="395"/>
    </location>
</feature>
<feature type="compositionally biased region" description="Low complexity" evidence="4">
    <location>
        <begin position="396"/>
        <end position="411"/>
    </location>
</feature>
<feature type="compositionally biased region" description="Polar residues" evidence="4">
    <location>
        <begin position="421"/>
        <end position="443"/>
    </location>
</feature>
<feature type="compositionally biased region" description="Polar residues" evidence="4">
    <location>
        <begin position="450"/>
        <end position="469"/>
    </location>
</feature>
<feature type="compositionally biased region" description="Low complexity" evidence="4">
    <location>
        <begin position="474"/>
        <end position="519"/>
    </location>
</feature>
<feature type="compositionally biased region" description="Low complexity" evidence="4">
    <location>
        <begin position="539"/>
        <end position="550"/>
    </location>
</feature>
<feature type="compositionally biased region" description="Low complexity" evidence="4">
    <location>
        <begin position="567"/>
        <end position="580"/>
    </location>
</feature>
<feature type="compositionally biased region" description="Gly residues" evidence="4">
    <location>
        <begin position="581"/>
        <end position="590"/>
    </location>
</feature>
<feature type="compositionally biased region" description="Low complexity" evidence="4">
    <location>
        <begin position="599"/>
        <end position="618"/>
    </location>
</feature>
<feature type="compositionally biased region" description="Gly residues" evidence="4">
    <location>
        <begin position="632"/>
        <end position="653"/>
    </location>
</feature>
<feature type="compositionally biased region" description="Low complexity" evidence="4">
    <location>
        <begin position="654"/>
        <end position="675"/>
    </location>
</feature>
<feature type="compositionally biased region" description="Gly residues" evidence="4">
    <location>
        <begin position="682"/>
        <end position="694"/>
    </location>
</feature>
<feature type="compositionally biased region" description="Low complexity" evidence="4">
    <location>
        <begin position="695"/>
        <end position="705"/>
    </location>
</feature>
<feature type="compositionally biased region" description="Low complexity" evidence="4">
    <location>
        <begin position="728"/>
        <end position="754"/>
    </location>
</feature>
<feature type="compositionally biased region" description="Low complexity" evidence="4">
    <location>
        <begin position="780"/>
        <end position="798"/>
    </location>
</feature>
<feature type="compositionally biased region" description="Gly residues" evidence="4">
    <location>
        <begin position="826"/>
        <end position="838"/>
    </location>
</feature>
<feature type="compositionally biased region" description="Low complexity" evidence="4">
    <location>
        <begin position="846"/>
        <end position="864"/>
    </location>
</feature>
<feature type="compositionally biased region" description="Polar residues" evidence="4">
    <location>
        <begin position="886"/>
        <end position="896"/>
    </location>
</feature>
<feature type="compositionally biased region" description="Polar residues" evidence="4">
    <location>
        <begin position="912"/>
        <end position="925"/>
    </location>
</feature>
<feature type="compositionally biased region" description="Basic and acidic residues" evidence="4">
    <location>
        <begin position="973"/>
        <end position="982"/>
    </location>
</feature>
<feature type="compositionally biased region" description="Polar residues" evidence="4">
    <location>
        <begin position="1014"/>
        <end position="1035"/>
    </location>
</feature>
<feature type="compositionally biased region" description="Basic and acidic residues" evidence="4">
    <location>
        <begin position="1047"/>
        <end position="1059"/>
    </location>
</feature>
<feature type="compositionally biased region" description="Basic residues" evidence="4">
    <location>
        <begin position="1067"/>
        <end position="1077"/>
    </location>
</feature>
<feature type="compositionally biased region" description="Low complexity" evidence="4">
    <location>
        <begin position="1104"/>
        <end position="1121"/>
    </location>
</feature>
<feature type="compositionally biased region" description="Gly residues" evidence="4">
    <location>
        <begin position="1142"/>
        <end position="1152"/>
    </location>
</feature>
<feature type="compositionally biased region" description="Polar residues" evidence="4">
    <location>
        <begin position="1162"/>
        <end position="1174"/>
    </location>
</feature>
<feature type="compositionally biased region" description="Low complexity" evidence="4">
    <location>
        <begin position="1175"/>
        <end position="1193"/>
    </location>
</feature>
<feature type="compositionally biased region" description="Gly residues" evidence="4">
    <location>
        <begin position="1220"/>
        <end position="1232"/>
    </location>
</feature>
<feature type="compositionally biased region" description="Low complexity" evidence="4">
    <location>
        <begin position="1255"/>
        <end position="1273"/>
    </location>
</feature>
<feature type="compositionally biased region" description="Gly residues" evidence="4">
    <location>
        <begin position="1300"/>
        <end position="1310"/>
    </location>
</feature>
<feature type="compositionally biased region" description="Low complexity" evidence="4">
    <location>
        <begin position="1333"/>
        <end position="1351"/>
    </location>
</feature>
<feature type="compositionally biased region" description="Basic and acidic residues" evidence="4">
    <location>
        <begin position="1377"/>
        <end position="1396"/>
    </location>
</feature>
<feature type="compositionally biased region" description="Low complexity" evidence="4">
    <location>
        <begin position="1413"/>
        <end position="1436"/>
    </location>
</feature>
<feature type="compositionally biased region" description="Gly residues" evidence="4">
    <location>
        <begin position="1454"/>
        <end position="1464"/>
    </location>
</feature>
<feature type="compositionally biased region" description="Low complexity" evidence="4">
    <location>
        <begin position="1487"/>
        <end position="1505"/>
    </location>
</feature>
<feature type="compositionally biased region" description="Gly residues" evidence="4">
    <location>
        <begin position="1532"/>
        <end position="1544"/>
    </location>
</feature>
<feature type="compositionally biased region" description="Low complexity" evidence="4">
    <location>
        <begin position="1567"/>
        <end position="1585"/>
    </location>
</feature>
<feature type="compositionally biased region" description="Low complexity" evidence="4">
    <location>
        <begin position="1643"/>
        <end position="1661"/>
    </location>
</feature>
<feature type="compositionally biased region" description="Low complexity" evidence="4">
    <location>
        <begin position="1683"/>
        <end position="1696"/>
    </location>
</feature>
<feature type="compositionally biased region" description="Basic and acidic residues" evidence="4">
    <location>
        <begin position="1698"/>
        <end position="1708"/>
    </location>
</feature>
<feature type="compositionally biased region" description="Low complexity" evidence="4">
    <location>
        <begin position="1724"/>
        <end position="1739"/>
    </location>
</feature>
<feature type="compositionally biased region" description="Low complexity" evidence="4">
    <location>
        <begin position="1801"/>
        <end position="1825"/>
    </location>
</feature>
<feature type="compositionally biased region" description="Basic and acidic residues" evidence="4">
    <location>
        <begin position="1829"/>
        <end position="1848"/>
    </location>
</feature>
<feature type="compositionally biased region" description="Low complexity" evidence="4">
    <location>
        <begin position="1879"/>
        <end position="1897"/>
    </location>
</feature>
<feature type="compositionally biased region" description="Gly residues" evidence="4">
    <location>
        <begin position="1924"/>
        <end position="1934"/>
    </location>
</feature>
<feature type="compositionally biased region" description="Low complexity" evidence="4">
    <location>
        <begin position="1949"/>
        <end position="1975"/>
    </location>
</feature>
<feature type="compositionally biased region" description="Gly residues" evidence="4">
    <location>
        <begin position="2002"/>
        <end position="2012"/>
    </location>
</feature>
<feature type="compositionally biased region" description="Polar residues" evidence="4">
    <location>
        <begin position="2026"/>
        <end position="2048"/>
    </location>
</feature>
<feature type="compositionally biased region" description="Polar residues" evidence="4">
    <location>
        <begin position="2061"/>
        <end position="2079"/>
    </location>
</feature>
<feature type="compositionally biased region" description="Polar residues" evidence="4">
    <location>
        <begin position="2100"/>
        <end position="2109"/>
    </location>
</feature>
<feature type="binding site" evidence="3">
    <location>
        <position position="62"/>
    </location>
    <ligand>
        <name>Ca(2+)</name>
        <dbReference type="ChEBI" id="CHEBI:29108"/>
    </ligand>
</feature>
<feature type="binding site" evidence="3">
    <location>
        <position position="64"/>
    </location>
    <ligand>
        <name>Ca(2+)</name>
        <dbReference type="ChEBI" id="CHEBI:29108"/>
    </ligand>
</feature>
<feature type="binding site" evidence="3">
    <location>
        <position position="66"/>
    </location>
    <ligand>
        <name>Ca(2+)</name>
        <dbReference type="ChEBI" id="CHEBI:29108"/>
    </ligand>
</feature>
<feature type="binding site" evidence="3">
    <location>
        <position position="68"/>
    </location>
    <ligand>
        <name>Ca(2+)</name>
        <dbReference type="ChEBI" id="CHEBI:29108"/>
    </ligand>
</feature>
<feature type="binding site" evidence="3">
    <location>
        <position position="73"/>
    </location>
    <ligand>
        <name>Ca(2+)</name>
        <dbReference type="ChEBI" id="CHEBI:29108"/>
    </ligand>
</feature>
<feature type="modified residue" description="Phosphoserine" evidence="6">
    <location>
        <position position="1198"/>
    </location>
</feature>
<feature type="modified residue" description="Phosphoserine" evidence="6">
    <location>
        <position position="1204"/>
    </location>
</feature>
<feature type="modified residue" description="Phosphoserine" evidence="6">
    <location>
        <position position="1205"/>
    </location>
</feature>
<feature type="modified residue" description="Phosphoserine" evidence="6">
    <location>
        <position position="1278"/>
    </location>
</feature>
<feature type="modified residue" description="Phosphoserine" evidence="6">
    <location>
        <position position="1284"/>
    </location>
</feature>
<feature type="modified residue" description="Phosphoserine" evidence="6">
    <location>
        <position position="1285"/>
    </location>
</feature>
<feature type="modified residue" description="Phosphoserine" evidence="6">
    <location>
        <position position="1356"/>
    </location>
</feature>
<feature type="modified residue" description="Phosphoserine" evidence="6">
    <location>
        <position position="1362"/>
    </location>
</feature>
<feature type="modified residue" description="Phosphoserine" evidence="6">
    <location>
        <position position="1363"/>
    </location>
</feature>
<feature type="modified residue" description="Phosphoserine" evidence="6">
    <location>
        <position position="1438"/>
    </location>
</feature>
<feature type="modified residue" description="Phosphoserine" evidence="6">
    <location>
        <position position="1439"/>
    </location>
</feature>
<feature type="modified residue" description="Phosphoserine" evidence="6">
    <location>
        <position position="1510"/>
    </location>
</feature>
<feature type="modified residue" description="Phosphoserine" evidence="6">
    <location>
        <position position="1516"/>
    </location>
</feature>
<feature type="modified residue" description="Phosphoserine" evidence="6">
    <location>
        <position position="1517"/>
    </location>
</feature>
<feature type="modified residue" description="Phosphoserine" evidence="6">
    <location>
        <position position="1590"/>
    </location>
</feature>
<feature type="modified residue" description="Phosphoserine" evidence="6">
    <location>
        <position position="1596"/>
    </location>
</feature>
<feature type="modified residue" description="Phosphoserine" evidence="6">
    <location>
        <position position="1597"/>
    </location>
</feature>
<feature type="modified residue" description="Phosphoserine" evidence="6">
    <location>
        <position position="1744"/>
    </location>
</feature>
<feature type="modified residue" description="Phosphoserine" evidence="6">
    <location>
        <position position="1750"/>
    </location>
</feature>
<feature type="modified residue" description="Phosphoserine" evidence="6">
    <location>
        <position position="1751"/>
    </location>
</feature>
<feature type="modified residue" description="Phosphoserine" evidence="6">
    <location>
        <position position="1824"/>
    </location>
</feature>
<feature type="modified residue" description="Phosphoserine" evidence="6">
    <location>
        <position position="1830"/>
    </location>
</feature>
<feature type="modified residue" description="Phosphoserine" evidence="6">
    <location>
        <position position="1831"/>
    </location>
</feature>
<feature type="modified residue" description="Phosphoserine" evidence="6">
    <location>
        <position position="1902"/>
    </location>
</feature>
<feature type="modified residue" description="Phosphoserine" evidence="6">
    <location>
        <position position="1908"/>
    </location>
</feature>
<feature type="modified residue" description="Phosphoserine" evidence="6">
    <location>
        <position position="1909"/>
    </location>
</feature>
<feature type="modified residue" description="Phosphoserine" evidence="6">
    <location>
        <position position="1980"/>
    </location>
</feature>
<feature type="modified residue" description="Phosphoserine" evidence="6">
    <location>
        <position position="1986"/>
    </location>
</feature>
<feature type="modified residue" description="Phosphoserine" evidence="6">
    <location>
        <position position="1987"/>
    </location>
</feature>
<feature type="modified residue" description="Phosphoserine" evidence="6">
    <location>
        <position position="2104"/>
    </location>
</feature>
<feature type="sequence conflict" description="In Ref. 1; AAZ99028." evidence="5" ref="1">
    <original>N</original>
    <variation>H</variation>
    <location>
        <position position="2118"/>
    </location>
</feature>
<evidence type="ECO:0000250" key="1"/>
<evidence type="ECO:0000250" key="2">
    <source>
        <dbReference type="UniProtKB" id="Q5D862"/>
    </source>
</evidence>
<evidence type="ECO:0000255" key="3">
    <source>
        <dbReference type="PROSITE-ProRule" id="PRU00448"/>
    </source>
</evidence>
<evidence type="ECO:0000256" key="4">
    <source>
        <dbReference type="SAM" id="MobiDB-lite"/>
    </source>
</evidence>
<evidence type="ECO:0000305" key="5"/>
<evidence type="ECO:0007744" key="6">
    <source>
    </source>
</evidence>
<accession>Q2VIS4</accession>
<accession>Q8CB36</accession>
<sequence>MAYLLRSVVTIIDVFYKYTKQDEECGTLSKDELKELLEKEFRPILKNPDDPDTVDVIMHMLDRDHDRRLDFTEFILMIFKLALACNKVLGKEYCKASGSKKHRRGHQHQEEESETEEEEETPRQKSGFRFSSWSEGEEHGHSSGGSRGPAKHRRGSNSKRLERQDELSSSEESRKKHHGSIFGHSWSSNKEKDGSRSEELGEKGDKSYDSPSRESEEEYESGYRLNHQGREGHSGLSCGLEKNKYELNYIQLRKGGEQKLGYNTSSSGNSKIQSHVYGFSNSSGCCRPKNASSSCQASRSQGQGNQSCRTQSNCQSGTSGGQGYGCVSEGQSSRCCQPKPRSCSQSSSQRGYGSKQCGQPQNCGRQQRMGSSHSSCCGPYGSGATQSSGCGQQRMSSCGHSSSSHQKGCSSNGFSKGDQRASGSGHSSCCEQHGTNSSQSSGFKQHGHESGQSCCGQHGTASSQSSGYSQHRVGSGQSCHYGQHGSSSGQSSSSGRHGSGSGQSSSSRHNRSGSSQSSGLEEHGSSSHQSHSSGHHGSGSRQSSGSEQHGAVSGQSSGSGKHETGPSQSSSSGHHGSGSQQHGGGSGQSTGFGEHESSSGHSSSSGQHRSGSRHSSGSGKHESGRSQSSGSGHHGSGSQQHGGGSGNSTGFGEHGSSSHPLPSSGQNESSSGQSSRSERHGTGSGQSSGFGQHGSGSHQSSSSGHNEYGSGQTSSSWPHGKGSGQESGYGEQESGHGQSSSSWQHGTGPGQSSSSEEEESRPGQSSSSWQHGKGSGQESGYGEQEAGHGQSSSSWQHGTGAGNQSSGYGEHKSGPSHSSRSWHHGTGSGQSLGFGQHGKGSHQSESSGHYESVSEPSSSSWQHGNGSGESYGYGEHESGHGQSSSAWNHGNESGQSNGYGEHESGHGQSSSAWNHGNESGQSNGFGENESGRDQEGYQQRESFHGQHRHPLSQHEQHSQFGYGRSPRSPVHPESSEGEEHSVVPRRYSGYGHGQGQAGHQQRESGYGQRGRPQGPSQDSSRQPQAGHGQPSQSGYGRSPRRSQVHPEYSEGEAHSEVSQRHSGSSHCHCHCHGQARHQQRESVHGQRGRPQGPSQDSSRHPQAGPGQPSQSGSRRSPRSQPVHPESSEGEEHSVVPQRHSGSGHGHGQGQGQAGHQQRESVHGQQGRPQGPSQDSSRQPQAGQGQPSQSGSGRSPRRSPVHPESSEGEEHSVVPQRHSGSGHGHGQGQGQGQAGHQQRESVHGQRSRPQGPFQDSSRQPQAGQGQPSQSGSGRSPRRSPVHPESSEGEEHSVVPQRHSGSGHGHGQGQGQAGHQQRESVHGQPVRPEVPTQDSSRQPQAGQGQPSQSGSGRSPRRSPVHPESSEGEEHSVVPQRNSESCHCHCHDQAGHQQRESVHGQRGRPQGPSQDSSRHPQAGPGQPSQSGSRRSPRSSPVHPESSEGEEHSVVPQRHSGSGHGHGQGQGQAGHQQRESVHGQRGRPQGPTQDSSRQPQAGQGQPSQSGSGRSPRRSPVHPESSEGEEHSVVPQRHSGSGHGHGHGQGQGQAGHQQRESVHGQRGRPQGPSQDSSRQPQAGQGQPSQSGSGRSPRRSPVHPESSEGEEHSVVPQRYSGSGHGHGQGQAGHQQRESVHGQRGRPQGPSQDSSRQPQAGQGQPSQSGSGRSPRRSPVHPESSEGEEHSVIPQRHSGSGHSHGQGQVHAEHQQRESVHGQRGRPQGPSQDSSRQPQAGQGQPSLSGSGRSPRRSPVHPESSEGEEHSVVPQRHSHSESGHGHGQGQGQAGHQQRESVHGQRGRPQGPSQDSSRQPQAGQGQPSQSGSGRSPGRSPVHPESSEGEEHSVVPQRHSESGHGHGQGQGQAGHQQRESVHGQRGRPQGPSQDSSRQPQAGQGQPSQSGSGRSPRRSPVHPESSEGEEHSVVPQRHSGSGHGHGQGQGQAGHQQRESVHGQPVRPQGPSQDSSSQPQASQGQPSQSGSGRSPRRSPVHPESSEGEEHSVVPQRHSGSGHGHGQGQGQAGHQQRESLHGQRGRSQSPFHPSHSIHWQSKCTISKKSSRLSGHYGRNHFQSTISGNQYDSSQSSRHGSYGPQDYDYGQSGYGPSGRLRSNSQSSIPFSSAHRATNMEVLPCGQSFSPSDHVGTKANEQIGELVFKYRESETGPDQSVDYYNLTESNSTTRGHECSHGHSVVVPEHSDDSDFNYGHSYNGKQQICQSQPTVQSCFDDSQYILFQKHLESPSFGNQSGFSPNERQLYTCNESIDSYHLSSDSNNRNQIYSSNNSFPNLYCIGTEQCIYLPSATILGEGTEGQEPGYTQPGTICKYNQFLDGRKSRTRGNHETGKMKSGSAYLDSNTPLYTYVQEQKSYYFE</sequence>
<protein>
    <recommendedName>
        <fullName>Filaggrin-2</fullName>
        <shortName>FLG-2</shortName>
    </recommendedName>
    <alternativeName>
        <fullName>Intermediate filament-associated protein</fullName>
    </alternativeName>
</protein>
<reference key="1">
    <citation type="submission" date="2005-07" db="EMBL/GenBank/DDBJ databases">
        <title>FLG-2, a novel repetitive protein that is abundantly expressed in mammalian epidermis and functionally related to filaggrin.</title>
        <authorList>
            <person name="Listwan P."/>
            <person name="Rothnagel J.A."/>
        </authorList>
    </citation>
    <scope>NUCLEOTIDE SEQUENCE [GENOMIC DNA]</scope>
    <source>
        <strain>129/SvJ</strain>
    </source>
</reference>
<reference key="2">
    <citation type="journal article" date="2005" name="Science">
        <title>The transcriptional landscape of the mammalian genome.</title>
        <authorList>
            <person name="Carninci P."/>
            <person name="Kasukawa T."/>
            <person name="Katayama S."/>
            <person name="Gough J."/>
            <person name="Frith M.C."/>
            <person name="Maeda N."/>
            <person name="Oyama R."/>
            <person name="Ravasi T."/>
            <person name="Lenhard B."/>
            <person name="Wells C."/>
            <person name="Kodzius R."/>
            <person name="Shimokawa K."/>
            <person name="Bajic V.B."/>
            <person name="Brenner S.E."/>
            <person name="Batalov S."/>
            <person name="Forrest A.R."/>
            <person name="Zavolan M."/>
            <person name="Davis M.J."/>
            <person name="Wilming L.G."/>
            <person name="Aidinis V."/>
            <person name="Allen J.E."/>
            <person name="Ambesi-Impiombato A."/>
            <person name="Apweiler R."/>
            <person name="Aturaliya R.N."/>
            <person name="Bailey T.L."/>
            <person name="Bansal M."/>
            <person name="Baxter L."/>
            <person name="Beisel K.W."/>
            <person name="Bersano T."/>
            <person name="Bono H."/>
            <person name="Chalk A.M."/>
            <person name="Chiu K.P."/>
            <person name="Choudhary V."/>
            <person name="Christoffels A."/>
            <person name="Clutterbuck D.R."/>
            <person name="Crowe M.L."/>
            <person name="Dalla E."/>
            <person name="Dalrymple B.P."/>
            <person name="de Bono B."/>
            <person name="Della Gatta G."/>
            <person name="di Bernardo D."/>
            <person name="Down T."/>
            <person name="Engstrom P."/>
            <person name="Fagiolini M."/>
            <person name="Faulkner G."/>
            <person name="Fletcher C.F."/>
            <person name="Fukushima T."/>
            <person name="Furuno M."/>
            <person name="Futaki S."/>
            <person name="Gariboldi M."/>
            <person name="Georgii-Hemming P."/>
            <person name="Gingeras T.R."/>
            <person name="Gojobori T."/>
            <person name="Green R.E."/>
            <person name="Gustincich S."/>
            <person name="Harbers M."/>
            <person name="Hayashi Y."/>
            <person name="Hensch T.K."/>
            <person name="Hirokawa N."/>
            <person name="Hill D."/>
            <person name="Huminiecki L."/>
            <person name="Iacono M."/>
            <person name="Ikeo K."/>
            <person name="Iwama A."/>
            <person name="Ishikawa T."/>
            <person name="Jakt M."/>
            <person name="Kanapin A."/>
            <person name="Katoh M."/>
            <person name="Kawasawa Y."/>
            <person name="Kelso J."/>
            <person name="Kitamura H."/>
            <person name="Kitano H."/>
            <person name="Kollias G."/>
            <person name="Krishnan S.P."/>
            <person name="Kruger A."/>
            <person name="Kummerfeld S.K."/>
            <person name="Kurochkin I.V."/>
            <person name="Lareau L.F."/>
            <person name="Lazarevic D."/>
            <person name="Lipovich L."/>
            <person name="Liu J."/>
            <person name="Liuni S."/>
            <person name="McWilliam S."/>
            <person name="Madan Babu M."/>
            <person name="Madera M."/>
            <person name="Marchionni L."/>
            <person name="Matsuda H."/>
            <person name="Matsuzawa S."/>
            <person name="Miki H."/>
            <person name="Mignone F."/>
            <person name="Miyake S."/>
            <person name="Morris K."/>
            <person name="Mottagui-Tabar S."/>
            <person name="Mulder N."/>
            <person name="Nakano N."/>
            <person name="Nakauchi H."/>
            <person name="Ng P."/>
            <person name="Nilsson R."/>
            <person name="Nishiguchi S."/>
            <person name="Nishikawa S."/>
            <person name="Nori F."/>
            <person name="Ohara O."/>
            <person name="Okazaki Y."/>
            <person name="Orlando V."/>
            <person name="Pang K.C."/>
            <person name="Pavan W.J."/>
            <person name="Pavesi G."/>
            <person name="Pesole G."/>
            <person name="Petrovsky N."/>
            <person name="Piazza S."/>
            <person name="Reed J."/>
            <person name="Reid J.F."/>
            <person name="Ring B.Z."/>
            <person name="Ringwald M."/>
            <person name="Rost B."/>
            <person name="Ruan Y."/>
            <person name="Salzberg S.L."/>
            <person name="Sandelin A."/>
            <person name="Schneider C."/>
            <person name="Schoenbach C."/>
            <person name="Sekiguchi K."/>
            <person name="Semple C.A."/>
            <person name="Seno S."/>
            <person name="Sessa L."/>
            <person name="Sheng Y."/>
            <person name="Shibata Y."/>
            <person name="Shimada H."/>
            <person name="Shimada K."/>
            <person name="Silva D."/>
            <person name="Sinclair B."/>
            <person name="Sperling S."/>
            <person name="Stupka E."/>
            <person name="Sugiura K."/>
            <person name="Sultana R."/>
            <person name="Takenaka Y."/>
            <person name="Taki K."/>
            <person name="Tammoja K."/>
            <person name="Tan S.L."/>
            <person name="Tang S."/>
            <person name="Taylor M.S."/>
            <person name="Tegner J."/>
            <person name="Teichmann S.A."/>
            <person name="Ueda H.R."/>
            <person name="van Nimwegen E."/>
            <person name="Verardo R."/>
            <person name="Wei C.L."/>
            <person name="Yagi K."/>
            <person name="Yamanishi H."/>
            <person name="Zabarovsky E."/>
            <person name="Zhu S."/>
            <person name="Zimmer A."/>
            <person name="Hide W."/>
            <person name="Bult C."/>
            <person name="Grimmond S.M."/>
            <person name="Teasdale R.D."/>
            <person name="Liu E.T."/>
            <person name="Brusic V."/>
            <person name="Quackenbush J."/>
            <person name="Wahlestedt C."/>
            <person name="Mattick J.S."/>
            <person name="Hume D.A."/>
            <person name="Kai C."/>
            <person name="Sasaki D."/>
            <person name="Tomaru Y."/>
            <person name="Fukuda S."/>
            <person name="Kanamori-Katayama M."/>
            <person name="Suzuki M."/>
            <person name="Aoki J."/>
            <person name="Arakawa T."/>
            <person name="Iida J."/>
            <person name="Imamura K."/>
            <person name="Itoh M."/>
            <person name="Kato T."/>
            <person name="Kawaji H."/>
            <person name="Kawagashira N."/>
            <person name="Kawashima T."/>
            <person name="Kojima M."/>
            <person name="Kondo S."/>
            <person name="Konno H."/>
            <person name="Nakano K."/>
            <person name="Ninomiya N."/>
            <person name="Nishio T."/>
            <person name="Okada M."/>
            <person name="Plessy C."/>
            <person name="Shibata K."/>
            <person name="Shiraki T."/>
            <person name="Suzuki S."/>
            <person name="Tagami M."/>
            <person name="Waki K."/>
            <person name="Watahiki A."/>
            <person name="Okamura-Oho Y."/>
            <person name="Suzuki H."/>
            <person name="Kawai J."/>
            <person name="Hayashizaki Y."/>
        </authorList>
    </citation>
    <scope>NUCLEOTIDE SEQUENCE [LARGE SCALE MRNA] OF 2047-2362</scope>
    <source>
        <strain>C57BL/6J</strain>
        <tissue>Vagina</tissue>
    </source>
</reference>
<reference key="3">
    <citation type="journal article" date="2010" name="Cell">
        <title>A tissue-specific atlas of mouse protein phosphorylation and expression.</title>
        <authorList>
            <person name="Huttlin E.L."/>
            <person name="Jedrychowski M.P."/>
            <person name="Elias J.E."/>
            <person name="Goswami T."/>
            <person name="Rad R."/>
            <person name="Beausoleil S.A."/>
            <person name="Villen J."/>
            <person name="Haas W."/>
            <person name="Sowa M.E."/>
            <person name="Gygi S.P."/>
        </authorList>
    </citation>
    <scope>PHOSPHORYLATION [LARGE SCALE ANALYSIS] AT SER-1198; SER-1204; SER-1205; SER-1278; SER-1284; SER-1285; SER-1356; SER-1362; SER-1363; SER-1438; SER-1439; SER-1510; SER-1516; SER-1517; SER-1590; SER-1596; SER-1597; SER-1744; SER-1750; SER-1751; SER-1824; SER-1830; SER-1831; SER-1902; SER-1908; SER-1909; SER-1980; SER-1986; SER-1987 AND SER-2104</scope>
    <scope>IDENTIFICATION BY MASS SPECTROMETRY [LARGE SCALE ANALYSIS]</scope>
    <source>
        <tissue>Brown adipose tissue</tissue>
    </source>
</reference>
<comment type="function">
    <text evidence="2">Essential for normal cell-cell adhesion in the cornified cell layers. Important for proper integrity and mechanical strength of the stratum corneum of the epidermis.</text>
</comment>
<comment type="subcellular location">
    <subcellularLocation>
        <location evidence="2">Cytoplasm</location>
    </subcellularLocation>
    <subcellularLocation>
        <location evidence="2">Cytoplasmic granule</location>
    </subcellularLocation>
</comment>
<comment type="PTM">
    <text evidence="2">Deiminated by PADI1, PADI2 or PADI3 in vitro. The deiminated form is degraded by calpain-1/CAPN1 more quickly and into shorter peptides than the intact protein.</text>
</comment>
<comment type="PTM">
    <text evidence="2">May be processed by calpain-1/CAPN1.</text>
</comment>
<comment type="similarity">
    <text evidence="5">Belongs to the S100-fused protein family.</text>
</comment>
<comment type="similarity">
    <text evidence="5">In the N-terminal section; belongs to the S-100 family.</text>
</comment>
<comment type="sequence caution" evidence="5">
    <conflict type="erroneous initiation">
        <sequence resource="EMBL-CDS" id="BAC29615"/>
    </conflict>
</comment>
<organism>
    <name type="scientific">Mus musculus</name>
    <name type="common">Mouse</name>
    <dbReference type="NCBI Taxonomy" id="10090"/>
    <lineage>
        <taxon>Eukaryota</taxon>
        <taxon>Metazoa</taxon>
        <taxon>Chordata</taxon>
        <taxon>Craniata</taxon>
        <taxon>Vertebrata</taxon>
        <taxon>Euteleostomi</taxon>
        <taxon>Mammalia</taxon>
        <taxon>Eutheria</taxon>
        <taxon>Euarchontoglires</taxon>
        <taxon>Glires</taxon>
        <taxon>Rodentia</taxon>
        <taxon>Myomorpha</taxon>
        <taxon>Muroidea</taxon>
        <taxon>Muridae</taxon>
        <taxon>Murinae</taxon>
        <taxon>Mus</taxon>
        <taxon>Mus</taxon>
    </lineage>
</organism>
<gene>
    <name type="primary">Flg2</name>
</gene>
<dbReference type="EMBL" id="DQ118292">
    <property type="protein sequence ID" value="AAZ99028.1"/>
    <property type="molecule type" value="Genomic_DNA"/>
</dbReference>
<dbReference type="EMBL" id="AK036878">
    <property type="protein sequence ID" value="BAC29615.1"/>
    <property type="status" value="ALT_INIT"/>
    <property type="molecule type" value="mRNA"/>
</dbReference>
<dbReference type="RefSeq" id="NP_001013826.1">
    <property type="nucleotide sequence ID" value="NM_001013804.1"/>
</dbReference>
<dbReference type="SMR" id="Q2VIS4"/>
<dbReference type="BioGRID" id="230864">
    <property type="interactions" value="1"/>
</dbReference>
<dbReference type="FunCoup" id="Q2VIS4">
    <property type="interactions" value="15"/>
</dbReference>
<dbReference type="STRING" id="10090.ENSMUSP00000096482"/>
<dbReference type="GlyGen" id="Q2VIS4">
    <property type="glycosylation" value="4 sites, 2 N-linked glycans (2 sites), 1 O-linked glycan (2 sites)"/>
</dbReference>
<dbReference type="iPTMnet" id="Q2VIS4"/>
<dbReference type="PhosphoSitePlus" id="Q2VIS4"/>
<dbReference type="PaxDb" id="10090-ENSMUSP00000096482"/>
<dbReference type="ProteomicsDB" id="266849"/>
<dbReference type="GeneID" id="229574"/>
<dbReference type="KEGG" id="mmu:229574"/>
<dbReference type="UCSC" id="uc029unl.1">
    <property type="organism name" value="mouse"/>
</dbReference>
<dbReference type="AGR" id="MGI:3645678"/>
<dbReference type="CTD" id="388698"/>
<dbReference type="MGI" id="MGI:3645678">
    <property type="gene designation" value="Flg2"/>
</dbReference>
<dbReference type="eggNOG" id="ENOG502QQH0">
    <property type="taxonomic scope" value="Eukaryota"/>
</dbReference>
<dbReference type="InParanoid" id="Q2VIS4"/>
<dbReference type="PhylomeDB" id="Q2VIS4"/>
<dbReference type="Reactome" id="R-MMU-6798695">
    <property type="pathway name" value="Neutrophil degranulation"/>
</dbReference>
<dbReference type="BioGRID-ORCS" id="229574">
    <property type="hits" value="2 hits in 54 CRISPR screens"/>
</dbReference>
<dbReference type="PRO" id="PR:Q2VIS4"/>
<dbReference type="Proteomes" id="UP000000589">
    <property type="component" value="Unplaced"/>
</dbReference>
<dbReference type="RNAct" id="Q2VIS4">
    <property type="molecule type" value="protein"/>
</dbReference>
<dbReference type="GO" id="GO:0001533">
    <property type="term" value="C:cornified envelope"/>
    <property type="evidence" value="ECO:0000314"/>
    <property type="project" value="MGI"/>
</dbReference>
<dbReference type="GO" id="GO:0005737">
    <property type="term" value="C:cytoplasm"/>
    <property type="evidence" value="ECO:0007669"/>
    <property type="project" value="UniProtKB-SubCell"/>
</dbReference>
<dbReference type="GO" id="GO:0005509">
    <property type="term" value="F:calcium ion binding"/>
    <property type="evidence" value="ECO:0007669"/>
    <property type="project" value="InterPro"/>
</dbReference>
<dbReference type="GO" id="GO:0046914">
    <property type="term" value="F:transition metal ion binding"/>
    <property type="evidence" value="ECO:0007669"/>
    <property type="project" value="InterPro"/>
</dbReference>
<dbReference type="GO" id="GO:0007155">
    <property type="term" value="P:cell adhesion"/>
    <property type="evidence" value="ECO:0000250"/>
    <property type="project" value="UniProtKB"/>
</dbReference>
<dbReference type="GO" id="GO:0048730">
    <property type="term" value="P:epidermis morphogenesis"/>
    <property type="evidence" value="ECO:0000250"/>
    <property type="project" value="UniProtKB"/>
</dbReference>
<dbReference type="CDD" id="cd00213">
    <property type="entry name" value="S-100"/>
    <property type="match status" value="1"/>
</dbReference>
<dbReference type="FunFam" id="1.10.238.10:FF:000133">
    <property type="entry name" value="Filaggrin"/>
    <property type="match status" value="1"/>
</dbReference>
<dbReference type="Gene3D" id="1.10.238.10">
    <property type="entry name" value="EF-hand"/>
    <property type="match status" value="1"/>
</dbReference>
<dbReference type="InterPro" id="IPR011992">
    <property type="entry name" value="EF-hand-dom_pair"/>
</dbReference>
<dbReference type="InterPro" id="IPR018247">
    <property type="entry name" value="EF_Hand_1_Ca_BS"/>
</dbReference>
<dbReference type="InterPro" id="IPR002048">
    <property type="entry name" value="EF_hand_dom"/>
</dbReference>
<dbReference type="InterPro" id="IPR034325">
    <property type="entry name" value="S-100_dom"/>
</dbReference>
<dbReference type="InterPro" id="IPR052503">
    <property type="entry name" value="S100-fused_Epidermal_Struct"/>
</dbReference>
<dbReference type="InterPro" id="IPR001751">
    <property type="entry name" value="S100/CaBP7/8-like_CS"/>
</dbReference>
<dbReference type="InterPro" id="IPR013787">
    <property type="entry name" value="S100_Ca-bd_sub"/>
</dbReference>
<dbReference type="PANTHER" id="PTHR22571:SF24">
    <property type="entry name" value="FILAGGRIN-2"/>
    <property type="match status" value="1"/>
</dbReference>
<dbReference type="PANTHER" id="PTHR22571">
    <property type="entry name" value="FILAGGRIN-RELATED"/>
    <property type="match status" value="1"/>
</dbReference>
<dbReference type="Pfam" id="PF01023">
    <property type="entry name" value="S_100"/>
    <property type="match status" value="1"/>
</dbReference>
<dbReference type="SMART" id="SM01394">
    <property type="entry name" value="S_100"/>
    <property type="match status" value="1"/>
</dbReference>
<dbReference type="SUPFAM" id="SSF47473">
    <property type="entry name" value="EF-hand"/>
    <property type="match status" value="1"/>
</dbReference>
<dbReference type="PROSITE" id="PS00018">
    <property type="entry name" value="EF_HAND_1"/>
    <property type="match status" value="1"/>
</dbReference>
<dbReference type="PROSITE" id="PS50222">
    <property type="entry name" value="EF_HAND_2"/>
    <property type="match status" value="2"/>
</dbReference>
<dbReference type="PROSITE" id="PS00303">
    <property type="entry name" value="S100_CABP"/>
    <property type="match status" value="1"/>
</dbReference>
<proteinExistence type="evidence at protein level"/>
<keyword id="KW-0106">Calcium</keyword>
<keyword id="KW-0963">Cytoplasm</keyword>
<keyword id="KW-0479">Metal-binding</keyword>
<keyword id="KW-0597">Phosphoprotein</keyword>
<keyword id="KW-1185">Reference proteome</keyword>
<keyword id="KW-0677">Repeat</keyword>
<name>FILA2_MOUSE</name>